<dbReference type="EMBL" id="CP000890">
    <property type="protein sequence ID" value="ABX77522.1"/>
    <property type="molecule type" value="Genomic_DNA"/>
</dbReference>
<dbReference type="SMR" id="A9NAX9"/>
<dbReference type="KEGG" id="cbs:COXBURSA331_A0346"/>
<dbReference type="HOGENOM" id="CLU_073626_1_1_6"/>
<dbReference type="GO" id="GO:0022627">
    <property type="term" value="C:cytosolic small ribosomal subunit"/>
    <property type="evidence" value="ECO:0007669"/>
    <property type="project" value="TreeGrafter"/>
</dbReference>
<dbReference type="GO" id="GO:0019843">
    <property type="term" value="F:rRNA binding"/>
    <property type="evidence" value="ECO:0007669"/>
    <property type="project" value="UniProtKB-UniRule"/>
</dbReference>
<dbReference type="GO" id="GO:0003735">
    <property type="term" value="F:structural constituent of ribosome"/>
    <property type="evidence" value="ECO:0007669"/>
    <property type="project" value="InterPro"/>
</dbReference>
<dbReference type="GO" id="GO:0006412">
    <property type="term" value="P:translation"/>
    <property type="evidence" value="ECO:0007669"/>
    <property type="project" value="UniProtKB-UniRule"/>
</dbReference>
<dbReference type="CDD" id="cd00364">
    <property type="entry name" value="Ribosomal_uS17"/>
    <property type="match status" value="1"/>
</dbReference>
<dbReference type="FunFam" id="2.40.50.140:FF:000014">
    <property type="entry name" value="30S ribosomal protein S17"/>
    <property type="match status" value="1"/>
</dbReference>
<dbReference type="Gene3D" id="2.40.50.140">
    <property type="entry name" value="Nucleic acid-binding proteins"/>
    <property type="match status" value="1"/>
</dbReference>
<dbReference type="HAMAP" id="MF_01345_B">
    <property type="entry name" value="Ribosomal_uS17_B"/>
    <property type="match status" value="1"/>
</dbReference>
<dbReference type="InterPro" id="IPR012340">
    <property type="entry name" value="NA-bd_OB-fold"/>
</dbReference>
<dbReference type="InterPro" id="IPR000266">
    <property type="entry name" value="Ribosomal_uS17"/>
</dbReference>
<dbReference type="InterPro" id="IPR019984">
    <property type="entry name" value="Ribosomal_uS17_bact/chlr"/>
</dbReference>
<dbReference type="InterPro" id="IPR019979">
    <property type="entry name" value="Ribosomal_uS17_CS"/>
</dbReference>
<dbReference type="NCBIfam" id="NF004123">
    <property type="entry name" value="PRK05610.1"/>
    <property type="match status" value="1"/>
</dbReference>
<dbReference type="NCBIfam" id="TIGR03635">
    <property type="entry name" value="uS17_bact"/>
    <property type="match status" value="1"/>
</dbReference>
<dbReference type="PANTHER" id="PTHR10744">
    <property type="entry name" value="40S RIBOSOMAL PROTEIN S11 FAMILY MEMBER"/>
    <property type="match status" value="1"/>
</dbReference>
<dbReference type="PANTHER" id="PTHR10744:SF1">
    <property type="entry name" value="SMALL RIBOSOMAL SUBUNIT PROTEIN US17M"/>
    <property type="match status" value="1"/>
</dbReference>
<dbReference type="Pfam" id="PF00366">
    <property type="entry name" value="Ribosomal_S17"/>
    <property type="match status" value="1"/>
</dbReference>
<dbReference type="PRINTS" id="PR00973">
    <property type="entry name" value="RIBOSOMALS17"/>
</dbReference>
<dbReference type="SUPFAM" id="SSF50249">
    <property type="entry name" value="Nucleic acid-binding proteins"/>
    <property type="match status" value="1"/>
</dbReference>
<dbReference type="PROSITE" id="PS00056">
    <property type="entry name" value="RIBOSOMAL_S17"/>
    <property type="match status" value="1"/>
</dbReference>
<keyword id="KW-0687">Ribonucleoprotein</keyword>
<keyword id="KW-0689">Ribosomal protein</keyword>
<keyword id="KW-0694">RNA-binding</keyword>
<keyword id="KW-0699">rRNA-binding</keyword>
<sequence>MNKNEKMVRSLMGTVVSNKMNDTVVVRVERRVKHPKYGKFIKRSTKIHAHDKGNECQIGDIVTIRECRPISKTKSWTLVKINERAEKVE</sequence>
<protein>
    <recommendedName>
        <fullName evidence="1">Small ribosomal subunit protein uS17</fullName>
    </recommendedName>
    <alternativeName>
        <fullName evidence="2">30S ribosomal protein S17</fullName>
    </alternativeName>
</protein>
<name>RS17_COXBR</name>
<accession>A9NAX9</accession>
<comment type="function">
    <text evidence="1">One of the primary rRNA binding proteins, it binds specifically to the 5'-end of 16S ribosomal RNA.</text>
</comment>
<comment type="subunit">
    <text evidence="1">Part of the 30S ribosomal subunit.</text>
</comment>
<comment type="similarity">
    <text evidence="1">Belongs to the universal ribosomal protein uS17 family.</text>
</comment>
<gene>
    <name evidence="1" type="primary">rpsQ</name>
    <name type="ordered locus">COXBURSA331_A0346</name>
</gene>
<feature type="chain" id="PRO_1000086837" description="Small ribosomal subunit protein uS17">
    <location>
        <begin position="1"/>
        <end position="89"/>
    </location>
</feature>
<reference key="1">
    <citation type="submission" date="2007-11" db="EMBL/GenBank/DDBJ databases">
        <title>Genome sequencing of phylogenetically and phenotypically diverse Coxiella burnetii isolates.</title>
        <authorList>
            <person name="Seshadri R."/>
            <person name="Samuel J.E."/>
        </authorList>
    </citation>
    <scope>NUCLEOTIDE SEQUENCE [LARGE SCALE GENOMIC DNA]</scope>
    <source>
        <strain>RSA 331 / Henzerling II</strain>
    </source>
</reference>
<evidence type="ECO:0000255" key="1">
    <source>
        <dbReference type="HAMAP-Rule" id="MF_01345"/>
    </source>
</evidence>
<evidence type="ECO:0000305" key="2"/>
<proteinExistence type="inferred from homology"/>
<organism>
    <name type="scientific">Coxiella burnetii (strain RSA 331 / Henzerling II)</name>
    <dbReference type="NCBI Taxonomy" id="360115"/>
    <lineage>
        <taxon>Bacteria</taxon>
        <taxon>Pseudomonadati</taxon>
        <taxon>Pseudomonadota</taxon>
        <taxon>Gammaproteobacteria</taxon>
        <taxon>Legionellales</taxon>
        <taxon>Coxiellaceae</taxon>
        <taxon>Coxiella</taxon>
    </lineage>
</organism>